<gene>
    <name evidence="2" type="primary">npaA</name>
    <name type="ORF">AO090038000030</name>
</gene>
<reference key="1">
    <citation type="journal article" date="2005" name="Nature">
        <title>Genome sequencing and analysis of Aspergillus oryzae.</title>
        <authorList>
            <person name="Machida M."/>
            <person name="Asai K."/>
            <person name="Sano M."/>
            <person name="Tanaka T."/>
            <person name="Kumagai T."/>
            <person name="Terai G."/>
            <person name="Kusumoto K."/>
            <person name="Arima T."/>
            <person name="Akita O."/>
            <person name="Kashiwagi Y."/>
            <person name="Abe K."/>
            <person name="Gomi K."/>
            <person name="Horiuchi H."/>
            <person name="Kitamoto K."/>
            <person name="Kobayashi T."/>
            <person name="Takeuchi M."/>
            <person name="Denning D.W."/>
            <person name="Galagan J.E."/>
            <person name="Nierman W.C."/>
            <person name="Yu J."/>
            <person name="Archer D.B."/>
            <person name="Bennett J.W."/>
            <person name="Bhatnagar D."/>
            <person name="Cleveland T.E."/>
            <person name="Fedorova N.D."/>
            <person name="Gotoh O."/>
            <person name="Horikawa H."/>
            <person name="Hosoyama A."/>
            <person name="Ichinomiya M."/>
            <person name="Igarashi R."/>
            <person name="Iwashita K."/>
            <person name="Juvvadi P.R."/>
            <person name="Kato M."/>
            <person name="Kato Y."/>
            <person name="Kin T."/>
            <person name="Kokubun A."/>
            <person name="Maeda H."/>
            <person name="Maeyama N."/>
            <person name="Maruyama J."/>
            <person name="Nagasaki H."/>
            <person name="Nakajima T."/>
            <person name="Oda K."/>
            <person name="Okada K."/>
            <person name="Paulsen I."/>
            <person name="Sakamoto K."/>
            <person name="Sawano T."/>
            <person name="Takahashi M."/>
            <person name="Takase K."/>
            <person name="Terabayashi Y."/>
            <person name="Wortman J.R."/>
            <person name="Yamada O."/>
            <person name="Yamagata Y."/>
            <person name="Anazawa H."/>
            <person name="Hata Y."/>
            <person name="Koide Y."/>
            <person name="Komori T."/>
            <person name="Koyama Y."/>
            <person name="Minetoki T."/>
            <person name="Suharnan S."/>
            <person name="Tanaka A."/>
            <person name="Isono K."/>
            <person name="Kuhara S."/>
            <person name="Ogasawara N."/>
            <person name="Kikuchi H."/>
        </authorList>
    </citation>
    <scope>NUCLEOTIDE SEQUENCE [LARGE SCALE GENOMIC DNA]</scope>
    <source>
        <strain>ATCC 42149 / RIB 40</strain>
    </source>
</reference>
<reference key="2">
    <citation type="journal article" date="2024" name="Org. Lett.">
        <title>How fungi biosynthesize 3-nitropropanoic acid: the simplest yet lethal mycotoxin.</title>
        <authorList>
            <person name="Johnson C.W."/>
            <person name="Ohashi M."/>
            <person name="Tang Y."/>
        </authorList>
    </citation>
    <scope>FUNCTION</scope>
    <scope>DISRUPTION PHENOTYPE</scope>
    <scope>CATALYTIC ACTIVITY</scope>
    <scope>COFACTOR</scope>
    <scope>PATHWAY</scope>
</reference>
<protein>
    <recommendedName>
        <fullName evidence="2">Nitrosuccinic acid synthase npaA</fullName>
        <ecNumber evidence="1">1.14.13.248</ecNumber>
    </recommendedName>
    <alternativeName>
        <fullName evidence="2">3-nitropropanoic acid biosynthesis cluster protein A</fullName>
    </alternativeName>
</protein>
<feature type="chain" id="PRO_0000461473" description="Nitrosuccinic acid synthase npaA">
    <location>
        <begin position="1"/>
        <end position="649"/>
    </location>
</feature>
<name>NPAA_ASPOR</name>
<comment type="function">
    <text evidence="1">Nitrosuccinic acid synthase; part of the gene cluster that mediates the biosynthesis of the deadly neurotoxic nitroalkane 3-nitropropanoic acid (3-NPA) that acts as an antimetabolite of succinate and irreversibly inhibits succinate dehydrogenase and disrupts mitochondrial oxidative phosphorylation (PubMed:38588324). NpaA catalyzes the iterative oxidation of L-aspartic acid to nitrosuccinic acid (2-nitrobutanedioate) (PubMed:38588324). Alternative amino acid substrates such as L-glutamate and D-aspartate are not accepted by npaA as a substrate, showing the strict substrate specificity toward L-aspartate (PubMed:38588324). The nitrosuccinic acid decarboxylase npaB then facilitates decarboxylation of Nitrosuccinic acid to produce 3-NPA (PubMed:38588324).</text>
</comment>
<comment type="catalytic activity">
    <reaction evidence="1">
        <text>L-aspartate + 3 NADPH + 3 O2 + 2 H(+) = 2-nitrobutanedioate + 3 NADP(+) + 4 H2O</text>
        <dbReference type="Rhea" id="RHEA:69008"/>
        <dbReference type="ChEBI" id="CHEBI:15377"/>
        <dbReference type="ChEBI" id="CHEBI:15378"/>
        <dbReference type="ChEBI" id="CHEBI:15379"/>
        <dbReference type="ChEBI" id="CHEBI:29991"/>
        <dbReference type="ChEBI" id="CHEBI:57783"/>
        <dbReference type="ChEBI" id="CHEBI:58349"/>
        <dbReference type="ChEBI" id="CHEBI:180682"/>
        <dbReference type="EC" id="1.14.13.248"/>
    </reaction>
    <physiologicalReaction direction="left-to-right" evidence="1">
        <dbReference type="Rhea" id="RHEA:69009"/>
    </physiologicalReaction>
</comment>
<comment type="cofactor">
    <cofactor evidence="1">
        <name>FAD</name>
        <dbReference type="ChEBI" id="CHEBI:57692"/>
    </cofactor>
</comment>
<comment type="pathway">
    <text evidence="1">Mycotoxin biosynthesis.</text>
</comment>
<comment type="disruption phenotype">
    <text evidence="1">Completely abolishes the production of 3-nitropropanoic acid.</text>
</comment>
<comment type="similarity">
    <text evidence="3">Belongs to the nitrosuccinic acid synthase family.</text>
</comment>
<dbReference type="EC" id="1.14.13.248" evidence="1"/>
<dbReference type="EMBL" id="AP007169">
    <property type="protein sequence ID" value="BAE63887.1"/>
    <property type="molecule type" value="Genomic_DNA"/>
</dbReference>
<dbReference type="RefSeq" id="XP_001825020.1">
    <property type="nucleotide sequence ID" value="XM_001824968.1"/>
</dbReference>
<dbReference type="SMR" id="Q2U3H8"/>
<dbReference type="STRING" id="510516.Q2U3H8"/>
<dbReference type="EnsemblFungi" id="BAE63887">
    <property type="protein sequence ID" value="BAE63887"/>
    <property type="gene ID" value="AO090038000030"/>
</dbReference>
<dbReference type="GeneID" id="5997115"/>
<dbReference type="KEGG" id="aor:AO090038000030"/>
<dbReference type="VEuPathDB" id="FungiDB:AO090038000030"/>
<dbReference type="HOGENOM" id="CLU_016297_0_0_1"/>
<dbReference type="OMA" id="AEDVTMF"/>
<dbReference type="OrthoDB" id="56252at5052"/>
<dbReference type="Proteomes" id="UP000006564">
    <property type="component" value="Chromosome 6"/>
</dbReference>
<dbReference type="GO" id="GO:0004497">
    <property type="term" value="F:monooxygenase activity"/>
    <property type="evidence" value="ECO:0007669"/>
    <property type="project" value="UniProtKB-KW"/>
</dbReference>
<dbReference type="InterPro" id="IPR036188">
    <property type="entry name" value="FAD/NAD-bd_sf"/>
</dbReference>
<dbReference type="InterPro" id="IPR038732">
    <property type="entry name" value="HpyO/CreE_NAD-binding"/>
</dbReference>
<dbReference type="InterPro" id="IPR052189">
    <property type="entry name" value="L-asp_N-monooxygenase_NS-form"/>
</dbReference>
<dbReference type="PANTHER" id="PTHR40254">
    <property type="entry name" value="BLR0577 PROTEIN"/>
    <property type="match status" value="1"/>
</dbReference>
<dbReference type="PANTHER" id="PTHR40254:SF1">
    <property type="entry name" value="BLR0577 PROTEIN"/>
    <property type="match status" value="1"/>
</dbReference>
<dbReference type="Pfam" id="PF13454">
    <property type="entry name" value="NAD_binding_9"/>
    <property type="match status" value="1"/>
</dbReference>
<dbReference type="SUPFAM" id="SSF51905">
    <property type="entry name" value="FAD/NAD(P)-binding domain"/>
    <property type="match status" value="1"/>
</dbReference>
<sequence>MKYSIPATPSGTTHAHVAIVGMGPRGTSALERLCASATDFLAPGARLTVHVVDPSPPGAGRVWRTAQSSELLMNTVTSQVTLYTDKSVVCSGPIREGPSLYEWATDAKLGLGPDEYPTRAQYGHYLEWVFREVVRNAPTGVEIEVHAARAVSLDDAPDGRQTLTLSTGRTLSGLSAVVLAQGHLPLVADAQLQQLTAYADQNGLRHITPSNPADVDLSSLKPGEPVFLRGLGLNFFDYMALLTTGRGGRFSRTPNGLRYHPSGREPRMYAGSRRGIPYQARGDNAKGAYGRHMPLIFTEEVIDGFRQRADSGNAPNFLKEIWPLVSKEVETVYYEALLRQHGFELGDFRDRFLATAHKSLEEAQVLTDFGITEENRWSWDRISRPYGERTFTAGAWRDWMLEYLREDAKEASLGNVNGPLKAALDVMRDLRNELRLIVDHAGLSGLSHRDHLDRWYTPLNAFLSIGPPRQRIEQMIALIEAGILDVLGPRPQARAEDGAWTVYSPEVPGLKVRVTTLIEARLPEPSLRHTADELLSHLLKTGQCRPHTVDGYETGGLDITLSPYRIIDSQGRAHERRFAVGVPTEGVHWVTAAGARPGVNSVTLSDTDAVARAALSAAVSGNTAVERQTEVKAWPNVEVSEVTVLEVGV</sequence>
<organism>
    <name type="scientific">Aspergillus oryzae (strain ATCC 42149 / RIB 40)</name>
    <name type="common">Yellow koji mold</name>
    <dbReference type="NCBI Taxonomy" id="510516"/>
    <lineage>
        <taxon>Eukaryota</taxon>
        <taxon>Fungi</taxon>
        <taxon>Dikarya</taxon>
        <taxon>Ascomycota</taxon>
        <taxon>Pezizomycotina</taxon>
        <taxon>Eurotiomycetes</taxon>
        <taxon>Eurotiomycetidae</taxon>
        <taxon>Eurotiales</taxon>
        <taxon>Aspergillaceae</taxon>
        <taxon>Aspergillus</taxon>
        <taxon>Aspergillus subgen. Circumdati</taxon>
    </lineage>
</organism>
<keyword id="KW-0503">Monooxygenase</keyword>
<keyword id="KW-0521">NADP</keyword>
<keyword id="KW-0560">Oxidoreductase</keyword>
<keyword id="KW-1185">Reference proteome</keyword>
<accession>Q2U3H8</accession>
<proteinExistence type="evidence at protein level"/>
<evidence type="ECO:0000269" key="1">
    <source>
    </source>
</evidence>
<evidence type="ECO:0000303" key="2">
    <source>
    </source>
</evidence>
<evidence type="ECO:0000305" key="3"/>